<gene>
    <name evidence="1" type="primary">purM</name>
    <name type="ordered locus">RD1_2252</name>
</gene>
<protein>
    <recommendedName>
        <fullName evidence="1">Phosphoribosylformylglycinamidine cyclo-ligase</fullName>
        <ecNumber evidence="1">6.3.3.1</ecNumber>
    </recommendedName>
    <alternativeName>
        <fullName evidence="1">AIR synthase</fullName>
    </alternativeName>
    <alternativeName>
        <fullName evidence="1">AIRS</fullName>
    </alternativeName>
    <alternativeName>
        <fullName evidence="1">Phosphoribosyl-aminoimidazole synthetase</fullName>
    </alternativeName>
</protein>
<reference key="1">
    <citation type="journal article" date="2007" name="J. Bacteriol.">
        <title>The complete genome sequence of Roseobacter denitrificans reveals a mixotrophic rather than photosynthetic metabolism.</title>
        <authorList>
            <person name="Swingley W.D."/>
            <person name="Sadekar S."/>
            <person name="Mastrian S.D."/>
            <person name="Matthies H.J."/>
            <person name="Hao J."/>
            <person name="Ramos H."/>
            <person name="Acharya C.R."/>
            <person name="Conrad A.L."/>
            <person name="Taylor H.L."/>
            <person name="Dejesa L.C."/>
            <person name="Shah M.K."/>
            <person name="O'Huallachain M.E."/>
            <person name="Lince M.T."/>
            <person name="Blankenship R.E."/>
            <person name="Beatty J.T."/>
            <person name="Touchman J.W."/>
        </authorList>
    </citation>
    <scope>NUCLEOTIDE SEQUENCE [LARGE SCALE GENOMIC DNA]</scope>
    <source>
        <strain>ATCC 33942 / OCh 114</strain>
    </source>
</reference>
<sequence>MNLPKNGMTYADAGVDIDAGNALVDRIKPAAKRTNRSGVMAGLGGFGALFDLKDAGYTDPILVAATDGVGTKLRIAIDTGHVDGVGIDLVAMCVNDLVCQGAEPLFFLDYFATGALETDKAARIIEGIALGCERAGCALIGGETAEMPGMYPAGDFDLAGFSVGAMERGAALPAHVAQGDVLLGLASDGVHSNGYSLVRKLVEVSGLSWDAPCPWAEQSLGAELLTPTRLYVKQALAAIDAGGVHALAHITGGGLTENLPRVLPEGLGADIDLSTWSLPAVFGWMAQTGGMQEAEMLKTFNCGIGMILVVAQEEADKLTQLLASLGEDVARIGHVSAREGVRYSGTLL</sequence>
<accession>Q167K4</accession>
<keyword id="KW-0067">ATP-binding</keyword>
<keyword id="KW-0963">Cytoplasm</keyword>
<keyword id="KW-0436">Ligase</keyword>
<keyword id="KW-0547">Nucleotide-binding</keyword>
<keyword id="KW-0658">Purine biosynthesis</keyword>
<keyword id="KW-1185">Reference proteome</keyword>
<feature type="chain" id="PRO_0000258398" description="Phosphoribosylformylglycinamidine cyclo-ligase">
    <location>
        <begin position="1"/>
        <end position="348"/>
    </location>
</feature>
<proteinExistence type="inferred from homology"/>
<organism>
    <name type="scientific">Roseobacter denitrificans (strain ATCC 33942 / OCh 114)</name>
    <name type="common">Erythrobacter sp. (strain OCh 114)</name>
    <name type="synonym">Roseobacter denitrificans</name>
    <dbReference type="NCBI Taxonomy" id="375451"/>
    <lineage>
        <taxon>Bacteria</taxon>
        <taxon>Pseudomonadati</taxon>
        <taxon>Pseudomonadota</taxon>
        <taxon>Alphaproteobacteria</taxon>
        <taxon>Rhodobacterales</taxon>
        <taxon>Roseobacteraceae</taxon>
        <taxon>Roseobacter</taxon>
    </lineage>
</organism>
<comment type="catalytic activity">
    <reaction evidence="1">
        <text>2-formamido-N(1)-(5-O-phospho-beta-D-ribosyl)acetamidine + ATP = 5-amino-1-(5-phospho-beta-D-ribosyl)imidazole + ADP + phosphate + H(+)</text>
        <dbReference type="Rhea" id="RHEA:23032"/>
        <dbReference type="ChEBI" id="CHEBI:15378"/>
        <dbReference type="ChEBI" id="CHEBI:30616"/>
        <dbReference type="ChEBI" id="CHEBI:43474"/>
        <dbReference type="ChEBI" id="CHEBI:137981"/>
        <dbReference type="ChEBI" id="CHEBI:147287"/>
        <dbReference type="ChEBI" id="CHEBI:456216"/>
        <dbReference type="EC" id="6.3.3.1"/>
    </reaction>
</comment>
<comment type="pathway">
    <text evidence="1">Purine metabolism; IMP biosynthesis via de novo pathway; 5-amino-1-(5-phospho-D-ribosyl)imidazole from N(2)-formyl-N(1)-(5-phospho-D-ribosyl)glycinamide: step 2/2.</text>
</comment>
<comment type="subcellular location">
    <subcellularLocation>
        <location evidence="1">Cytoplasm</location>
    </subcellularLocation>
</comment>
<comment type="similarity">
    <text evidence="1">Belongs to the AIR synthase family.</text>
</comment>
<name>PUR5_ROSDO</name>
<dbReference type="EC" id="6.3.3.1" evidence="1"/>
<dbReference type="EMBL" id="CP000362">
    <property type="protein sequence ID" value="ABG31839.1"/>
    <property type="molecule type" value="Genomic_DNA"/>
</dbReference>
<dbReference type="RefSeq" id="WP_011568456.1">
    <property type="nucleotide sequence ID" value="NC_008209.1"/>
</dbReference>
<dbReference type="SMR" id="Q167K4"/>
<dbReference type="STRING" id="375451.RD1_2252"/>
<dbReference type="KEGG" id="rde:RD1_2252"/>
<dbReference type="eggNOG" id="COG0150">
    <property type="taxonomic scope" value="Bacteria"/>
</dbReference>
<dbReference type="HOGENOM" id="CLU_047116_0_0_5"/>
<dbReference type="OrthoDB" id="9777881at2"/>
<dbReference type="UniPathway" id="UPA00074">
    <property type="reaction ID" value="UER00129"/>
</dbReference>
<dbReference type="Proteomes" id="UP000007029">
    <property type="component" value="Chromosome"/>
</dbReference>
<dbReference type="GO" id="GO:0005829">
    <property type="term" value="C:cytosol"/>
    <property type="evidence" value="ECO:0007669"/>
    <property type="project" value="TreeGrafter"/>
</dbReference>
<dbReference type="GO" id="GO:0005524">
    <property type="term" value="F:ATP binding"/>
    <property type="evidence" value="ECO:0007669"/>
    <property type="project" value="UniProtKB-KW"/>
</dbReference>
<dbReference type="GO" id="GO:0004637">
    <property type="term" value="F:phosphoribosylamine-glycine ligase activity"/>
    <property type="evidence" value="ECO:0007669"/>
    <property type="project" value="TreeGrafter"/>
</dbReference>
<dbReference type="GO" id="GO:0004641">
    <property type="term" value="F:phosphoribosylformylglycinamidine cyclo-ligase activity"/>
    <property type="evidence" value="ECO:0007669"/>
    <property type="project" value="UniProtKB-UniRule"/>
</dbReference>
<dbReference type="GO" id="GO:0006189">
    <property type="term" value="P:'de novo' IMP biosynthetic process"/>
    <property type="evidence" value="ECO:0007669"/>
    <property type="project" value="UniProtKB-UniRule"/>
</dbReference>
<dbReference type="GO" id="GO:0046084">
    <property type="term" value="P:adenine biosynthetic process"/>
    <property type="evidence" value="ECO:0007669"/>
    <property type="project" value="TreeGrafter"/>
</dbReference>
<dbReference type="CDD" id="cd02196">
    <property type="entry name" value="PurM"/>
    <property type="match status" value="1"/>
</dbReference>
<dbReference type="FunFam" id="3.30.1330.10:FF:000001">
    <property type="entry name" value="Phosphoribosylformylglycinamidine cyclo-ligase"/>
    <property type="match status" value="1"/>
</dbReference>
<dbReference type="FunFam" id="3.90.650.10:FF:000007">
    <property type="entry name" value="Trifunctional purine biosynthetic protein adenosine-3"/>
    <property type="match status" value="1"/>
</dbReference>
<dbReference type="Gene3D" id="3.90.650.10">
    <property type="entry name" value="PurM-like C-terminal domain"/>
    <property type="match status" value="1"/>
</dbReference>
<dbReference type="Gene3D" id="3.30.1330.10">
    <property type="entry name" value="PurM-like, N-terminal domain"/>
    <property type="match status" value="1"/>
</dbReference>
<dbReference type="HAMAP" id="MF_00741">
    <property type="entry name" value="AIRS"/>
    <property type="match status" value="1"/>
</dbReference>
<dbReference type="InterPro" id="IPR010918">
    <property type="entry name" value="PurM-like_C_dom"/>
</dbReference>
<dbReference type="InterPro" id="IPR036676">
    <property type="entry name" value="PurM-like_C_sf"/>
</dbReference>
<dbReference type="InterPro" id="IPR016188">
    <property type="entry name" value="PurM-like_N"/>
</dbReference>
<dbReference type="InterPro" id="IPR036921">
    <property type="entry name" value="PurM-like_N_sf"/>
</dbReference>
<dbReference type="InterPro" id="IPR004733">
    <property type="entry name" value="PurM_cligase"/>
</dbReference>
<dbReference type="NCBIfam" id="TIGR00878">
    <property type="entry name" value="purM"/>
    <property type="match status" value="1"/>
</dbReference>
<dbReference type="PANTHER" id="PTHR10520:SF12">
    <property type="entry name" value="TRIFUNCTIONAL PURINE BIOSYNTHETIC PROTEIN ADENOSINE-3"/>
    <property type="match status" value="1"/>
</dbReference>
<dbReference type="PANTHER" id="PTHR10520">
    <property type="entry name" value="TRIFUNCTIONAL PURINE BIOSYNTHETIC PROTEIN ADENOSINE-3-RELATED"/>
    <property type="match status" value="1"/>
</dbReference>
<dbReference type="Pfam" id="PF00586">
    <property type="entry name" value="AIRS"/>
    <property type="match status" value="1"/>
</dbReference>
<dbReference type="Pfam" id="PF02769">
    <property type="entry name" value="AIRS_C"/>
    <property type="match status" value="1"/>
</dbReference>
<dbReference type="SUPFAM" id="SSF56042">
    <property type="entry name" value="PurM C-terminal domain-like"/>
    <property type="match status" value="1"/>
</dbReference>
<dbReference type="SUPFAM" id="SSF55326">
    <property type="entry name" value="PurM N-terminal domain-like"/>
    <property type="match status" value="1"/>
</dbReference>
<evidence type="ECO:0000255" key="1">
    <source>
        <dbReference type="HAMAP-Rule" id="MF_00741"/>
    </source>
</evidence>